<protein>
    <recommendedName>
        <fullName>Structural DNA-binding protein p10</fullName>
        <shortName>p10</shortName>
    </recommendedName>
</protein>
<comment type="function">
    <text evidence="1">May play a role in genome packaging through direct interaction with viral DNA. Binds to ssDNA and dsDNA with the same apparent affinity in vitro.</text>
</comment>
<comment type="subcellular location">
    <subcellularLocation>
        <location evidence="1">Virion</location>
    </subcellularLocation>
    <text evidence="1">Found in association with the viral nucleoid.</text>
</comment>
<comment type="induction">
    <text evidence="1">Expressed in the early phase of the viral replicative cycle.</text>
</comment>
<comment type="similarity">
    <text evidence="3">Belongs to the asfivirus P10 family.</text>
</comment>
<organism>
    <name type="scientific">African swine fever virus (isolate Tick/Malawi/Lil 20-1/1983)</name>
    <name type="common">ASFV</name>
    <dbReference type="NCBI Taxonomy" id="10500"/>
    <lineage>
        <taxon>Viruses</taxon>
        <taxon>Varidnaviria</taxon>
        <taxon>Bamfordvirae</taxon>
        <taxon>Nucleocytoviricota</taxon>
        <taxon>Pokkesviricetes</taxon>
        <taxon>Asfuvirales</taxon>
        <taxon>Asfarviridae</taxon>
        <taxon>Asfivirus</taxon>
        <taxon>African swine fever virus</taxon>
    </lineage>
</organism>
<accession>P0C9X8</accession>
<evidence type="ECO:0000250" key="1">
    <source>
        <dbReference type="UniProtKB" id="Q89769"/>
    </source>
</evidence>
<evidence type="ECO:0000256" key="2">
    <source>
        <dbReference type="SAM" id="MobiDB-lite"/>
    </source>
</evidence>
<evidence type="ECO:0000305" key="3"/>
<proteinExistence type="inferred from homology"/>
<reference key="1">
    <citation type="submission" date="2003-03" db="EMBL/GenBank/DDBJ databases">
        <title>African swine fever virus genomes.</title>
        <authorList>
            <person name="Kutish G.F."/>
            <person name="Rock D.L."/>
        </authorList>
    </citation>
    <scope>NUCLEOTIDE SEQUENCE [LARGE SCALE GENOMIC DNA]</scope>
</reference>
<name>P10_ASFM2</name>
<keyword id="KW-0238">DNA-binding</keyword>
<keyword id="KW-0426">Late protein</keyword>
<keyword id="KW-0946">Virion</keyword>
<feature type="initiator methionine" description="Removed" evidence="1">
    <location>
        <position position="1"/>
    </location>
</feature>
<feature type="chain" id="PRO_0000373389" description="Structural DNA-binding protein p10">
    <location>
        <begin position="2"/>
        <end position="73"/>
    </location>
</feature>
<feature type="region of interest" description="Disordered" evidence="2">
    <location>
        <begin position="1"/>
        <end position="35"/>
    </location>
</feature>
<dbReference type="EMBL" id="AY261361">
    <property type="status" value="NOT_ANNOTATED_CDS"/>
    <property type="molecule type" value="Genomic_DNA"/>
</dbReference>
<dbReference type="SMR" id="P0C9X8"/>
<dbReference type="Proteomes" id="UP000000860">
    <property type="component" value="Segment"/>
</dbReference>
<dbReference type="GO" id="GO:0044423">
    <property type="term" value="C:virion component"/>
    <property type="evidence" value="ECO:0007669"/>
    <property type="project" value="UniProtKB-KW"/>
</dbReference>
<dbReference type="GO" id="GO:0003677">
    <property type="term" value="F:DNA binding"/>
    <property type="evidence" value="ECO:0007669"/>
    <property type="project" value="UniProtKB-KW"/>
</dbReference>
<gene>
    <name type="ordered locus">Mal-057</name>
</gene>
<organismHost>
    <name type="scientific">Ornithodoros</name>
    <name type="common">relapsing fever ticks</name>
    <dbReference type="NCBI Taxonomy" id="6937"/>
</organismHost>
<organismHost>
    <name type="scientific">Phacochoerus aethiopicus</name>
    <name type="common">Warthog</name>
    <dbReference type="NCBI Taxonomy" id="85517"/>
</organismHost>
<organismHost>
    <name type="scientific">Phacochoerus africanus</name>
    <name type="common">Warthog</name>
    <dbReference type="NCBI Taxonomy" id="41426"/>
</organismHost>
<organismHost>
    <name type="scientific">Potamochoerus larvatus</name>
    <name type="common">Bushpig</name>
    <dbReference type="NCBI Taxonomy" id="273792"/>
</organismHost>
<organismHost>
    <name type="scientific">Sus scrofa</name>
    <name type="common">Pig</name>
    <dbReference type="NCBI Taxonomy" id="9823"/>
</organismHost>
<sequence>MPTKAGTKSTAHKKTTTKGPSKSPKGKTHATALHQGMLYKDMVNVAKSKGIPIYQNGSRLTKSELEKKIRRSK</sequence>